<organism>
    <name type="scientific">Buchnera aphidicola subsp. Schizaphis graminum (strain Sg)</name>
    <dbReference type="NCBI Taxonomy" id="198804"/>
    <lineage>
        <taxon>Bacteria</taxon>
        <taxon>Pseudomonadati</taxon>
        <taxon>Pseudomonadota</taxon>
        <taxon>Gammaproteobacteria</taxon>
        <taxon>Enterobacterales</taxon>
        <taxon>Erwiniaceae</taxon>
        <taxon>Buchnera</taxon>
    </lineage>
</organism>
<proteinExistence type="inferred from homology"/>
<dbReference type="EMBL" id="AE013218">
    <property type="protein sequence ID" value="AAM67956.1"/>
    <property type="molecule type" value="Genomic_DNA"/>
</dbReference>
<dbReference type="SMR" id="Q8K9D5"/>
<dbReference type="STRING" id="198804.BUsg_406"/>
<dbReference type="KEGG" id="bas:BUsg_406"/>
<dbReference type="eggNOG" id="COG2919">
    <property type="taxonomic scope" value="Bacteria"/>
</dbReference>
<dbReference type="HOGENOM" id="CLU_134863_5_2_6"/>
<dbReference type="Proteomes" id="UP000000416">
    <property type="component" value="Chromosome"/>
</dbReference>
<dbReference type="GO" id="GO:0032153">
    <property type="term" value="C:cell division site"/>
    <property type="evidence" value="ECO:0007669"/>
    <property type="project" value="UniProtKB-UniRule"/>
</dbReference>
<dbReference type="GO" id="GO:0030428">
    <property type="term" value="C:cell septum"/>
    <property type="evidence" value="ECO:0007669"/>
    <property type="project" value="TreeGrafter"/>
</dbReference>
<dbReference type="GO" id="GO:0005886">
    <property type="term" value="C:plasma membrane"/>
    <property type="evidence" value="ECO:0007669"/>
    <property type="project" value="UniProtKB-SubCell"/>
</dbReference>
<dbReference type="GO" id="GO:0043093">
    <property type="term" value="P:FtsZ-dependent cytokinesis"/>
    <property type="evidence" value="ECO:0007669"/>
    <property type="project" value="UniProtKB-UniRule"/>
</dbReference>
<dbReference type="HAMAP" id="MF_00599">
    <property type="entry name" value="FtsB"/>
    <property type="match status" value="1"/>
</dbReference>
<dbReference type="InterPro" id="IPR023081">
    <property type="entry name" value="Cell_div_FtsB"/>
</dbReference>
<dbReference type="InterPro" id="IPR007060">
    <property type="entry name" value="FtsL/DivIC"/>
</dbReference>
<dbReference type="PANTHER" id="PTHR37485">
    <property type="entry name" value="CELL DIVISION PROTEIN FTSB"/>
    <property type="match status" value="1"/>
</dbReference>
<dbReference type="PANTHER" id="PTHR37485:SF1">
    <property type="entry name" value="CELL DIVISION PROTEIN FTSB"/>
    <property type="match status" value="1"/>
</dbReference>
<dbReference type="Pfam" id="PF04977">
    <property type="entry name" value="DivIC"/>
    <property type="match status" value="1"/>
</dbReference>
<protein>
    <recommendedName>
        <fullName evidence="1">Cell division protein FtsB</fullName>
    </recommendedName>
</protein>
<keyword id="KW-0131">Cell cycle</keyword>
<keyword id="KW-0132">Cell division</keyword>
<keyword id="KW-1003">Cell membrane</keyword>
<keyword id="KW-0175">Coiled coil</keyword>
<keyword id="KW-0472">Membrane</keyword>
<keyword id="KW-0812">Transmembrane</keyword>
<keyword id="KW-1133">Transmembrane helix</keyword>
<evidence type="ECO:0000255" key="1">
    <source>
        <dbReference type="HAMAP-Rule" id="MF_00599"/>
    </source>
</evidence>
<feature type="chain" id="PRO_0000214440" description="Cell division protein FtsB">
    <location>
        <begin position="1"/>
        <end position="66"/>
    </location>
</feature>
<feature type="topological domain" description="Cytoplasmic" evidence="1">
    <location>
        <begin position="1"/>
        <end position="3"/>
    </location>
</feature>
<feature type="transmembrane region" description="Helical" evidence="1">
    <location>
        <begin position="4"/>
        <end position="21"/>
    </location>
</feature>
<feature type="topological domain" description="Extracellular" evidence="1">
    <location>
        <begin position="22"/>
        <end position="66"/>
    </location>
</feature>
<feature type="coiled-coil region" evidence="1">
    <location>
        <begin position="38"/>
        <end position="66"/>
    </location>
</feature>
<comment type="function">
    <text evidence="1">Essential cell division protein. May link together the upstream cell division proteins, which are predominantly cytoplasmic, with the downstream cell division proteins, which are predominantly extracellular.</text>
</comment>
<comment type="subcellular location">
    <subcellularLocation>
        <location>Cell membrane</location>
        <topology>Single-pass type II membrane protein</topology>
    </subcellularLocation>
    <text evidence="1">Localizes to the division septum.</text>
</comment>
<comment type="similarity">
    <text evidence="1">Belongs to the FtsB family.</text>
</comment>
<accession>Q8K9D5</accession>
<reference key="1">
    <citation type="journal article" date="2002" name="Science">
        <title>50 million years of genomic stasis in endosymbiotic bacteria.</title>
        <authorList>
            <person name="Tamas I."/>
            <person name="Klasson L."/>
            <person name="Canbaeck B."/>
            <person name="Naeslund A.K."/>
            <person name="Eriksson A.-S."/>
            <person name="Wernegreen J.J."/>
            <person name="Sandstroem J.P."/>
            <person name="Moran N.A."/>
            <person name="Andersson S.G.E."/>
        </authorList>
    </citation>
    <scope>NUCLEOTIDE SEQUENCE [LARGE SCALE GENOMIC DNA]</scope>
    <source>
        <strain>Sg</strain>
    </source>
</reference>
<name>FTSB_BUCAP</name>
<gene>
    <name evidence="1" type="primary">ftsB</name>
    <name type="ordered locus">BUsg_406</name>
</gene>
<sequence>MKMLKIFLLFLLFWLQCSLWIGKNGILDYIKIYKKIIVQKKKNEDFQIRNNQLILEIERLNNAIKN</sequence>